<sequence>MRVAFFGTPLWAVPVLDALRKRHQVVLVVSQPDKPQGRGLRPAPSPVARYAEAEGLPLLRPARLREEAFLEALRQAAPEVAVVAAYGKLIPKEALDIPPHGFLNLHPSLLPKYRGAAPVQRALLAGERETGVSIMRLDEGLDTGPLYAVWRTPILPDEDAVALGNRLRDKGVELLLEVLERLPELTPRPQEGEASYAPPLSKEEGRLDFGESAEALYRRHRAVQPWPGSYFFHRGQRVKALRLRPEPGEGEPGVVARVGPEGVVVGTASGLLLLLEVQPEGRRAMPAADWARGYGVAPGTRLGQV</sequence>
<accession>Q5SLH3</accession>
<protein>
    <recommendedName>
        <fullName evidence="1">Methionyl-tRNA formyltransferase</fullName>
        <ecNumber evidence="1">2.1.2.9</ecNumber>
    </recommendedName>
</protein>
<feature type="chain" id="PRO_0000083073" description="Methionyl-tRNA formyltransferase">
    <location>
        <begin position="1"/>
        <end position="305"/>
    </location>
</feature>
<feature type="binding site" evidence="1">
    <location>
        <begin position="108"/>
        <end position="111"/>
    </location>
    <ligand>
        <name>(6S)-5,6,7,8-tetrahydrofolate</name>
        <dbReference type="ChEBI" id="CHEBI:57453"/>
    </ligand>
</feature>
<reference key="1">
    <citation type="submission" date="2004-11" db="EMBL/GenBank/DDBJ databases">
        <title>Complete genome sequence of Thermus thermophilus HB8.</title>
        <authorList>
            <person name="Masui R."/>
            <person name="Kurokawa K."/>
            <person name="Nakagawa N."/>
            <person name="Tokunaga F."/>
            <person name="Koyama Y."/>
            <person name="Shibata T."/>
            <person name="Oshima T."/>
            <person name="Yokoyama S."/>
            <person name="Yasunaga T."/>
            <person name="Kuramitsu S."/>
        </authorList>
    </citation>
    <scope>NUCLEOTIDE SEQUENCE [LARGE SCALE GENOMIC DNA]</scope>
    <source>
        <strain>ATCC 27634 / DSM 579 / HB8</strain>
    </source>
</reference>
<gene>
    <name evidence="1" type="primary">fmt</name>
    <name type="ordered locus">TTHA0320</name>
</gene>
<organism>
    <name type="scientific">Thermus thermophilus (strain ATCC 27634 / DSM 579 / HB8)</name>
    <dbReference type="NCBI Taxonomy" id="300852"/>
    <lineage>
        <taxon>Bacteria</taxon>
        <taxon>Thermotogati</taxon>
        <taxon>Deinococcota</taxon>
        <taxon>Deinococci</taxon>
        <taxon>Thermales</taxon>
        <taxon>Thermaceae</taxon>
        <taxon>Thermus</taxon>
    </lineage>
</organism>
<proteinExistence type="inferred from homology"/>
<evidence type="ECO:0000255" key="1">
    <source>
        <dbReference type="HAMAP-Rule" id="MF_00182"/>
    </source>
</evidence>
<comment type="function">
    <text evidence="1">Attaches a formyl group to the free amino group of methionyl-tRNA(fMet). The formyl group appears to play a dual role in the initiator identity of N-formylmethionyl-tRNA by promoting its recognition by IF2 and preventing the misappropriation of this tRNA by the elongation apparatus.</text>
</comment>
<comment type="catalytic activity">
    <reaction evidence="1">
        <text>L-methionyl-tRNA(fMet) + (6R)-10-formyltetrahydrofolate = N-formyl-L-methionyl-tRNA(fMet) + (6S)-5,6,7,8-tetrahydrofolate + H(+)</text>
        <dbReference type="Rhea" id="RHEA:24380"/>
        <dbReference type="Rhea" id="RHEA-COMP:9952"/>
        <dbReference type="Rhea" id="RHEA-COMP:9953"/>
        <dbReference type="ChEBI" id="CHEBI:15378"/>
        <dbReference type="ChEBI" id="CHEBI:57453"/>
        <dbReference type="ChEBI" id="CHEBI:78530"/>
        <dbReference type="ChEBI" id="CHEBI:78844"/>
        <dbReference type="ChEBI" id="CHEBI:195366"/>
        <dbReference type="EC" id="2.1.2.9"/>
    </reaction>
</comment>
<comment type="similarity">
    <text evidence="1">Belongs to the Fmt family.</text>
</comment>
<keyword id="KW-0648">Protein biosynthesis</keyword>
<keyword id="KW-1185">Reference proteome</keyword>
<keyword id="KW-0808">Transferase</keyword>
<dbReference type="EC" id="2.1.2.9" evidence="1"/>
<dbReference type="EMBL" id="AP008226">
    <property type="protein sequence ID" value="BAD70143.1"/>
    <property type="molecule type" value="Genomic_DNA"/>
</dbReference>
<dbReference type="RefSeq" id="WP_011227858.1">
    <property type="nucleotide sequence ID" value="NC_006461.1"/>
</dbReference>
<dbReference type="RefSeq" id="YP_143586.1">
    <property type="nucleotide sequence ID" value="NC_006461.1"/>
</dbReference>
<dbReference type="SMR" id="Q5SLH3"/>
<dbReference type="EnsemblBacteria" id="BAD70143">
    <property type="protein sequence ID" value="BAD70143"/>
    <property type="gene ID" value="BAD70143"/>
</dbReference>
<dbReference type="GeneID" id="3169685"/>
<dbReference type="KEGG" id="ttj:TTHA0320"/>
<dbReference type="PATRIC" id="fig|300852.9.peg.320"/>
<dbReference type="eggNOG" id="COG0223">
    <property type="taxonomic scope" value="Bacteria"/>
</dbReference>
<dbReference type="HOGENOM" id="CLU_033347_2_0_0"/>
<dbReference type="PhylomeDB" id="Q5SLH3"/>
<dbReference type="Proteomes" id="UP000000532">
    <property type="component" value="Chromosome"/>
</dbReference>
<dbReference type="GO" id="GO:0005829">
    <property type="term" value="C:cytosol"/>
    <property type="evidence" value="ECO:0007669"/>
    <property type="project" value="TreeGrafter"/>
</dbReference>
<dbReference type="GO" id="GO:0004479">
    <property type="term" value="F:methionyl-tRNA formyltransferase activity"/>
    <property type="evidence" value="ECO:0007669"/>
    <property type="project" value="UniProtKB-UniRule"/>
</dbReference>
<dbReference type="CDD" id="cd08646">
    <property type="entry name" value="FMT_core_Met-tRNA-FMT_N"/>
    <property type="match status" value="1"/>
</dbReference>
<dbReference type="CDD" id="cd08704">
    <property type="entry name" value="Met_tRNA_FMT_C"/>
    <property type="match status" value="1"/>
</dbReference>
<dbReference type="Gene3D" id="3.40.50.12230">
    <property type="match status" value="1"/>
</dbReference>
<dbReference type="HAMAP" id="MF_00182">
    <property type="entry name" value="Formyl_trans"/>
    <property type="match status" value="1"/>
</dbReference>
<dbReference type="InterPro" id="IPR005794">
    <property type="entry name" value="Fmt"/>
</dbReference>
<dbReference type="InterPro" id="IPR005793">
    <property type="entry name" value="Formyl_trans_C"/>
</dbReference>
<dbReference type="InterPro" id="IPR002376">
    <property type="entry name" value="Formyl_transf_N"/>
</dbReference>
<dbReference type="InterPro" id="IPR036477">
    <property type="entry name" value="Formyl_transf_N_sf"/>
</dbReference>
<dbReference type="InterPro" id="IPR011034">
    <property type="entry name" value="Formyl_transferase-like_C_sf"/>
</dbReference>
<dbReference type="InterPro" id="IPR044135">
    <property type="entry name" value="Met-tRNA-FMT_C"/>
</dbReference>
<dbReference type="InterPro" id="IPR041711">
    <property type="entry name" value="Met-tRNA-FMT_N"/>
</dbReference>
<dbReference type="NCBIfam" id="TIGR00460">
    <property type="entry name" value="fmt"/>
    <property type="match status" value="1"/>
</dbReference>
<dbReference type="PANTHER" id="PTHR11138">
    <property type="entry name" value="METHIONYL-TRNA FORMYLTRANSFERASE"/>
    <property type="match status" value="1"/>
</dbReference>
<dbReference type="PANTHER" id="PTHR11138:SF5">
    <property type="entry name" value="METHIONYL-TRNA FORMYLTRANSFERASE, MITOCHONDRIAL"/>
    <property type="match status" value="1"/>
</dbReference>
<dbReference type="Pfam" id="PF02911">
    <property type="entry name" value="Formyl_trans_C"/>
    <property type="match status" value="1"/>
</dbReference>
<dbReference type="Pfam" id="PF00551">
    <property type="entry name" value="Formyl_trans_N"/>
    <property type="match status" value="1"/>
</dbReference>
<dbReference type="SUPFAM" id="SSF50486">
    <property type="entry name" value="FMT C-terminal domain-like"/>
    <property type="match status" value="1"/>
</dbReference>
<dbReference type="SUPFAM" id="SSF53328">
    <property type="entry name" value="Formyltransferase"/>
    <property type="match status" value="1"/>
</dbReference>
<name>FMT_THET8</name>